<dbReference type="EMBL" id="U00096">
    <property type="protein sequence ID" value="AAC73176.1"/>
    <property type="molecule type" value="Genomic_DNA"/>
</dbReference>
<dbReference type="EMBL" id="AP009048">
    <property type="protein sequence ID" value="BAB96634.2"/>
    <property type="molecule type" value="Genomic_DNA"/>
</dbReference>
<dbReference type="PIR" id="A64728">
    <property type="entry name" value="A64728"/>
</dbReference>
<dbReference type="RefSeq" id="NP_414607.1">
    <property type="nucleotide sequence ID" value="NC_000913.3"/>
</dbReference>
<dbReference type="RefSeq" id="WP_001148390.1">
    <property type="nucleotide sequence ID" value="NZ_STEB01000010.1"/>
</dbReference>
<dbReference type="BioGRID" id="4259728">
    <property type="interactions" value="225"/>
</dbReference>
<dbReference type="FunCoup" id="P30149">
    <property type="interactions" value="6"/>
</dbReference>
<dbReference type="STRING" id="511145.b0065"/>
<dbReference type="PaxDb" id="511145-b0065"/>
<dbReference type="EnsemblBacteria" id="AAC73176">
    <property type="protein sequence ID" value="AAC73176"/>
    <property type="gene ID" value="b0065"/>
</dbReference>
<dbReference type="GeneID" id="944783"/>
<dbReference type="KEGG" id="ecj:JW5005"/>
<dbReference type="KEGG" id="eco:b0065"/>
<dbReference type="PATRIC" id="fig|1411691.4.peg.2217"/>
<dbReference type="EchoBASE" id="EB1531"/>
<dbReference type="eggNOG" id="COG0586">
    <property type="taxonomic scope" value="Bacteria"/>
</dbReference>
<dbReference type="HOGENOM" id="CLU_044208_3_2_6"/>
<dbReference type="InParanoid" id="P30149"/>
<dbReference type="OMA" id="LMPVYRH"/>
<dbReference type="OrthoDB" id="9780918at2"/>
<dbReference type="PhylomeDB" id="P30149"/>
<dbReference type="BioCyc" id="EcoCyc:EG11571-MONOMER"/>
<dbReference type="PRO" id="PR:P30149"/>
<dbReference type="Proteomes" id="UP000000625">
    <property type="component" value="Chromosome"/>
</dbReference>
<dbReference type="GO" id="GO:0005886">
    <property type="term" value="C:plasma membrane"/>
    <property type="evidence" value="ECO:0000314"/>
    <property type="project" value="EcoCyc"/>
</dbReference>
<dbReference type="GO" id="GO:0043093">
    <property type="term" value="P:FtsZ-dependent cytokinesis"/>
    <property type="evidence" value="ECO:0000316"/>
    <property type="project" value="EcoCyc"/>
</dbReference>
<dbReference type="GO" id="GO:0010212">
    <property type="term" value="P:response to ionizing radiation"/>
    <property type="evidence" value="ECO:0000315"/>
    <property type="project" value="EcoCyc"/>
</dbReference>
<dbReference type="InterPro" id="IPR032818">
    <property type="entry name" value="DedA-like"/>
</dbReference>
<dbReference type="InterPro" id="IPR032816">
    <property type="entry name" value="VTT_dom"/>
</dbReference>
<dbReference type="PANTHER" id="PTHR30353">
    <property type="entry name" value="INNER MEMBRANE PROTEIN DEDA-RELATED"/>
    <property type="match status" value="1"/>
</dbReference>
<dbReference type="PANTHER" id="PTHR30353:SF15">
    <property type="entry name" value="INNER MEMBRANE PROTEIN YABI"/>
    <property type="match status" value="1"/>
</dbReference>
<dbReference type="Pfam" id="PF09335">
    <property type="entry name" value="VTT_dom"/>
    <property type="match status" value="1"/>
</dbReference>
<gene>
    <name type="primary">yabI</name>
    <name type="ordered locus">b0065</name>
    <name type="ordered locus">JW5005</name>
</gene>
<comment type="subcellular location">
    <subcellularLocation>
        <location>Cell inner membrane</location>
        <topology>Multi-pass membrane protein</topology>
    </subcellularLocation>
</comment>
<comment type="similarity">
    <text evidence="2">Belongs to the DedA family.</text>
</comment>
<name>YABI_ECOLI</name>
<keyword id="KW-0997">Cell inner membrane</keyword>
<keyword id="KW-1003">Cell membrane</keyword>
<keyword id="KW-0472">Membrane</keyword>
<keyword id="KW-1185">Reference proteome</keyword>
<keyword id="KW-0812">Transmembrane</keyword>
<keyword id="KW-1133">Transmembrane helix</keyword>
<reference key="1">
    <citation type="journal article" date="1992" name="Nucleic Acids Res.">
        <title>Systematic sequencing of the Escherichia coli genome: analysis of the 0-2.4 min region.</title>
        <authorList>
            <person name="Yura T."/>
            <person name="Mori H."/>
            <person name="Nagai H."/>
            <person name="Nagata T."/>
            <person name="Ishihama A."/>
            <person name="Fujita N."/>
            <person name="Isono K."/>
            <person name="Mizobuchi K."/>
            <person name="Nakata A."/>
        </authorList>
    </citation>
    <scope>NUCLEOTIDE SEQUENCE [LARGE SCALE GENOMIC DNA]</scope>
    <source>
        <strain>K12</strain>
    </source>
</reference>
<reference key="2">
    <citation type="journal article" date="1997" name="Science">
        <title>The complete genome sequence of Escherichia coli K-12.</title>
        <authorList>
            <person name="Blattner F.R."/>
            <person name="Plunkett G. III"/>
            <person name="Bloch C.A."/>
            <person name="Perna N.T."/>
            <person name="Burland V."/>
            <person name="Riley M."/>
            <person name="Collado-Vides J."/>
            <person name="Glasner J.D."/>
            <person name="Rode C.K."/>
            <person name="Mayhew G.F."/>
            <person name="Gregor J."/>
            <person name="Davis N.W."/>
            <person name="Kirkpatrick H.A."/>
            <person name="Goeden M.A."/>
            <person name="Rose D.J."/>
            <person name="Mau B."/>
            <person name="Shao Y."/>
        </authorList>
    </citation>
    <scope>NUCLEOTIDE SEQUENCE [LARGE SCALE GENOMIC DNA]</scope>
    <source>
        <strain>K12 / MG1655 / ATCC 47076</strain>
    </source>
</reference>
<reference key="3">
    <citation type="journal article" date="2006" name="Mol. Syst. Biol.">
        <title>Highly accurate genome sequences of Escherichia coli K-12 strains MG1655 and W3110.</title>
        <authorList>
            <person name="Hayashi K."/>
            <person name="Morooka N."/>
            <person name="Yamamoto Y."/>
            <person name="Fujita K."/>
            <person name="Isono K."/>
            <person name="Choi S."/>
            <person name="Ohtsubo E."/>
            <person name="Baba T."/>
            <person name="Wanner B.L."/>
            <person name="Mori H."/>
            <person name="Horiuchi T."/>
        </authorList>
    </citation>
    <scope>NUCLEOTIDE SEQUENCE [LARGE SCALE GENOMIC DNA]</scope>
    <source>
        <strain>K12 / W3110 / ATCC 27325 / DSM 5911</strain>
    </source>
</reference>
<reference key="4">
    <citation type="journal article" date="2005" name="Science">
        <title>Global topology analysis of the Escherichia coli inner membrane proteome.</title>
        <authorList>
            <person name="Daley D.O."/>
            <person name="Rapp M."/>
            <person name="Granseth E."/>
            <person name="Melen K."/>
            <person name="Drew D."/>
            <person name="von Heijne G."/>
        </authorList>
    </citation>
    <scope>TOPOLOGY [LARGE SCALE ANALYSIS]</scope>
    <source>
        <strain>K12 / MG1655 / ATCC 47076</strain>
    </source>
</reference>
<organism>
    <name type="scientific">Escherichia coli (strain K12)</name>
    <dbReference type="NCBI Taxonomy" id="83333"/>
    <lineage>
        <taxon>Bacteria</taxon>
        <taxon>Pseudomonadati</taxon>
        <taxon>Pseudomonadota</taxon>
        <taxon>Gammaproteobacteria</taxon>
        <taxon>Enterobacterales</taxon>
        <taxon>Enterobacteriaceae</taxon>
        <taxon>Escherichia</taxon>
    </lineage>
</organism>
<feature type="chain" id="PRO_0000161410" description="Inner membrane protein YabI">
    <location>
        <begin position="1"/>
        <end position="254"/>
    </location>
</feature>
<feature type="topological domain" description="Periplasmic" evidence="1">
    <location>
        <begin position="1"/>
        <end position="7"/>
    </location>
</feature>
<feature type="transmembrane region" description="Helical" evidence="1">
    <location>
        <begin position="8"/>
        <end position="28"/>
    </location>
</feature>
<feature type="transmembrane region" description="Helical" evidence="1">
    <location>
        <begin position="29"/>
        <end position="49"/>
    </location>
</feature>
<feature type="topological domain" description="Periplasmic" evidence="1">
    <location>
        <begin position="50"/>
        <end position="58"/>
    </location>
</feature>
<feature type="transmembrane region" description="Helical" evidence="1">
    <location>
        <begin position="59"/>
        <end position="79"/>
    </location>
</feature>
<feature type="topological domain" description="Cytoplasmic" evidence="1">
    <location>
        <begin position="80"/>
        <end position="144"/>
    </location>
</feature>
<feature type="transmembrane region" description="Helical" evidence="1">
    <location>
        <begin position="145"/>
        <end position="165"/>
    </location>
</feature>
<feature type="topological domain" description="Periplasmic" evidence="1">
    <location>
        <begin position="166"/>
        <end position="178"/>
    </location>
</feature>
<feature type="transmembrane region" description="Helical" evidence="1">
    <location>
        <begin position="179"/>
        <end position="199"/>
    </location>
</feature>
<feature type="topological domain" description="Cytoplasmic" evidence="1">
    <location>
        <begin position="200"/>
        <end position="215"/>
    </location>
</feature>
<feature type="transmembrane region" description="Helical" evidence="1">
    <location>
        <begin position="216"/>
        <end position="236"/>
    </location>
</feature>
<feature type="topological domain" description="Periplasmic" evidence="1">
    <location>
        <begin position="237"/>
        <end position="254"/>
    </location>
</feature>
<evidence type="ECO:0000255" key="1"/>
<evidence type="ECO:0000305" key="2"/>
<proteinExistence type="evidence at protein level"/>
<protein>
    <recommendedName>
        <fullName>Inner membrane protein YabI</fullName>
    </recommendedName>
</protein>
<sequence length="254" mass="28244">MQALLEHFITQSTVYSLMAVVLVAFLESLALVGLILPGTVLMAGLGALIGSGELSFWHAWLAGIIGCLMGDWISFWLGWRFKKPLHRWSFLKKNKALLDKTEHALHQHSMFTILVGRFVGPTRPLVPMVAGMLDLPVAKFITPNIIGCLLWPPFYFLPGILAGAAIDIPAGMQSGEFKWLLLATAVFLWVGGWLCWRLWRSGKATDRLSHYLSRGRLLWLTPLISAIGVVALVVLIRHPLMPVYIDILRKVVGV</sequence>
<accession>P30149</accession>
<accession>P75634</accession>